<proteinExistence type="inferred from homology"/>
<organism>
    <name type="scientific">Albidiferax ferrireducens (strain ATCC BAA-621 / DSM 15236 / T118)</name>
    <name type="common">Rhodoferax ferrireducens</name>
    <dbReference type="NCBI Taxonomy" id="338969"/>
    <lineage>
        <taxon>Bacteria</taxon>
        <taxon>Pseudomonadati</taxon>
        <taxon>Pseudomonadota</taxon>
        <taxon>Betaproteobacteria</taxon>
        <taxon>Burkholderiales</taxon>
        <taxon>Comamonadaceae</taxon>
        <taxon>Rhodoferax</taxon>
    </lineage>
</organism>
<evidence type="ECO:0000255" key="1">
    <source>
        <dbReference type="HAMAP-Rule" id="MF_00505"/>
    </source>
</evidence>
<evidence type="ECO:0000256" key="2">
    <source>
        <dbReference type="SAM" id="MobiDB-lite"/>
    </source>
</evidence>
<feature type="chain" id="PRO_0000258522" description="Chaperone protein HtpG">
    <location>
        <begin position="1"/>
        <end position="663"/>
    </location>
</feature>
<feature type="region of interest" description="A; substrate-binding" evidence="1">
    <location>
        <begin position="1"/>
        <end position="352"/>
    </location>
</feature>
<feature type="region of interest" description="Disordered" evidence="2">
    <location>
        <begin position="218"/>
        <end position="237"/>
    </location>
</feature>
<feature type="region of interest" description="B" evidence="1">
    <location>
        <begin position="353"/>
        <end position="595"/>
    </location>
</feature>
<feature type="region of interest" description="C" evidence="1">
    <location>
        <begin position="596"/>
        <end position="663"/>
    </location>
</feature>
<feature type="compositionally biased region" description="Basic and acidic residues" evidence="2">
    <location>
        <begin position="218"/>
        <end position="228"/>
    </location>
</feature>
<gene>
    <name evidence="1" type="primary">htpG</name>
    <name type="ordered locus">Rfer_3551</name>
</gene>
<sequence length="663" mass="72925">MTKQTLSFQAEVAQLLHLVTHSLYSNKEIFLRELISNASDACDKLRYEAINDSGLYEDAPTLEVRVSFDPAAKTLTISDNGIGMSAQEAIDHLGTIAKSGTKDFVSKLSGDQKADSQLIGQFGVGFYSGFIVADKITVESRRAGMKASEGVRWISGGAGDFEVETIERAARGTSVILHLRDDAMDYCSAWKLKSIINKYSDHISLPILMEKEEWKDGELINPSDEKGGRQPGGMVKTGEWETVNKGNAIWARAKKDITPEQYTEFYKQISHDFEAPLAYTHNRVEGSTEYTQLLYLPSKAPMDLFNREKSAGVKLYVKRVFIMDDAEALLPTYLRFVKGVVDSADLPLNVSRELLQESRDVKAIREGCTKRVLGMLEDLAKHDKLPAPSADGGTDTTAGVSDVLSEEDKANEGKYSKFYAEFGAVLKEGLGEDYANKDRLAKLLRFASSSTDTVSVSFADYKARMKEGQEAIYYITADTPAAAKNSPQLEVFKKKGIEVLLMTDRVDEWALNYLQEFDGTPLQSVAKGAVDLGKLQDEAEKKAAEEAAETFKPLLAKLKEALKDKAEDVRVTTRLVDSPACLVVQDHGMSTQLARMLKQAGQAAPDVKPVLEVNAEHPLVKKLDGSVHFNDLAHILFDQALLAEGGLPADPAAYVKRVNALLV</sequence>
<comment type="function">
    <text evidence="1">Molecular chaperone. Has ATPase activity.</text>
</comment>
<comment type="subunit">
    <text evidence="1">Homodimer.</text>
</comment>
<comment type="subcellular location">
    <subcellularLocation>
        <location evidence="1">Cytoplasm</location>
    </subcellularLocation>
</comment>
<comment type="similarity">
    <text evidence="1">Belongs to the heat shock protein 90 family.</text>
</comment>
<protein>
    <recommendedName>
        <fullName evidence="1">Chaperone protein HtpG</fullName>
    </recommendedName>
    <alternativeName>
        <fullName evidence="1">Heat shock protein HtpG</fullName>
    </alternativeName>
    <alternativeName>
        <fullName evidence="1">High temperature protein G</fullName>
    </alternativeName>
</protein>
<keyword id="KW-0067">ATP-binding</keyword>
<keyword id="KW-0143">Chaperone</keyword>
<keyword id="KW-0963">Cytoplasm</keyword>
<keyword id="KW-0547">Nucleotide-binding</keyword>
<keyword id="KW-1185">Reference proteome</keyword>
<keyword id="KW-0346">Stress response</keyword>
<dbReference type="EMBL" id="CP000267">
    <property type="protein sequence ID" value="ABD71255.1"/>
    <property type="molecule type" value="Genomic_DNA"/>
</dbReference>
<dbReference type="RefSeq" id="WP_011465818.1">
    <property type="nucleotide sequence ID" value="NC_007908.1"/>
</dbReference>
<dbReference type="SMR" id="Q21SJ8"/>
<dbReference type="STRING" id="338969.Rfer_3551"/>
<dbReference type="KEGG" id="rfr:Rfer_3551"/>
<dbReference type="eggNOG" id="COG0326">
    <property type="taxonomic scope" value="Bacteria"/>
</dbReference>
<dbReference type="HOGENOM" id="CLU_006684_3_0_4"/>
<dbReference type="OrthoDB" id="9802640at2"/>
<dbReference type="Proteomes" id="UP000008332">
    <property type="component" value="Chromosome"/>
</dbReference>
<dbReference type="GO" id="GO:0005737">
    <property type="term" value="C:cytoplasm"/>
    <property type="evidence" value="ECO:0007669"/>
    <property type="project" value="UniProtKB-SubCell"/>
</dbReference>
<dbReference type="GO" id="GO:0005524">
    <property type="term" value="F:ATP binding"/>
    <property type="evidence" value="ECO:0007669"/>
    <property type="project" value="UniProtKB-UniRule"/>
</dbReference>
<dbReference type="GO" id="GO:0016887">
    <property type="term" value="F:ATP hydrolysis activity"/>
    <property type="evidence" value="ECO:0007669"/>
    <property type="project" value="InterPro"/>
</dbReference>
<dbReference type="GO" id="GO:0140662">
    <property type="term" value="F:ATP-dependent protein folding chaperone"/>
    <property type="evidence" value="ECO:0007669"/>
    <property type="project" value="InterPro"/>
</dbReference>
<dbReference type="GO" id="GO:0051082">
    <property type="term" value="F:unfolded protein binding"/>
    <property type="evidence" value="ECO:0007669"/>
    <property type="project" value="UniProtKB-UniRule"/>
</dbReference>
<dbReference type="CDD" id="cd16927">
    <property type="entry name" value="HATPase_Hsp90-like"/>
    <property type="match status" value="1"/>
</dbReference>
<dbReference type="FunFam" id="3.30.565.10:FF:000009">
    <property type="entry name" value="Molecular chaperone HtpG"/>
    <property type="match status" value="1"/>
</dbReference>
<dbReference type="Gene3D" id="3.30.230.80">
    <property type="match status" value="1"/>
</dbReference>
<dbReference type="Gene3D" id="3.40.50.11260">
    <property type="match status" value="1"/>
</dbReference>
<dbReference type="Gene3D" id="1.20.120.790">
    <property type="entry name" value="Heat shock protein 90, C-terminal domain"/>
    <property type="match status" value="1"/>
</dbReference>
<dbReference type="Gene3D" id="3.30.565.10">
    <property type="entry name" value="Histidine kinase-like ATPase, C-terminal domain"/>
    <property type="match status" value="1"/>
</dbReference>
<dbReference type="HAMAP" id="MF_00505">
    <property type="entry name" value="HSP90"/>
    <property type="match status" value="1"/>
</dbReference>
<dbReference type="InterPro" id="IPR036890">
    <property type="entry name" value="HATPase_C_sf"/>
</dbReference>
<dbReference type="InterPro" id="IPR019805">
    <property type="entry name" value="Heat_shock_protein_90_CS"/>
</dbReference>
<dbReference type="InterPro" id="IPR037196">
    <property type="entry name" value="HSP90_C"/>
</dbReference>
<dbReference type="InterPro" id="IPR001404">
    <property type="entry name" value="Hsp90_fam"/>
</dbReference>
<dbReference type="InterPro" id="IPR020575">
    <property type="entry name" value="Hsp90_N"/>
</dbReference>
<dbReference type="InterPro" id="IPR020568">
    <property type="entry name" value="Ribosomal_Su5_D2-typ_SF"/>
</dbReference>
<dbReference type="NCBIfam" id="NF003555">
    <property type="entry name" value="PRK05218.1"/>
    <property type="match status" value="1"/>
</dbReference>
<dbReference type="PANTHER" id="PTHR11528">
    <property type="entry name" value="HEAT SHOCK PROTEIN 90 FAMILY MEMBER"/>
    <property type="match status" value="1"/>
</dbReference>
<dbReference type="Pfam" id="PF13589">
    <property type="entry name" value="HATPase_c_3"/>
    <property type="match status" value="1"/>
</dbReference>
<dbReference type="Pfam" id="PF00183">
    <property type="entry name" value="HSP90"/>
    <property type="match status" value="1"/>
</dbReference>
<dbReference type="PIRSF" id="PIRSF002583">
    <property type="entry name" value="Hsp90"/>
    <property type="match status" value="1"/>
</dbReference>
<dbReference type="PRINTS" id="PR00775">
    <property type="entry name" value="HEATSHOCK90"/>
</dbReference>
<dbReference type="SMART" id="SM00387">
    <property type="entry name" value="HATPase_c"/>
    <property type="match status" value="1"/>
</dbReference>
<dbReference type="SUPFAM" id="SSF55874">
    <property type="entry name" value="ATPase domain of HSP90 chaperone/DNA topoisomerase II/histidine kinase"/>
    <property type="match status" value="1"/>
</dbReference>
<dbReference type="SUPFAM" id="SSF110942">
    <property type="entry name" value="HSP90 C-terminal domain"/>
    <property type="match status" value="1"/>
</dbReference>
<dbReference type="SUPFAM" id="SSF54211">
    <property type="entry name" value="Ribosomal protein S5 domain 2-like"/>
    <property type="match status" value="1"/>
</dbReference>
<dbReference type="PROSITE" id="PS00298">
    <property type="entry name" value="HSP90"/>
    <property type="match status" value="1"/>
</dbReference>
<name>HTPG_ALBFT</name>
<reference key="1">
    <citation type="submission" date="2006-02" db="EMBL/GenBank/DDBJ databases">
        <title>Complete sequence of chromosome of Rhodoferax ferrireducens DSM 15236.</title>
        <authorList>
            <person name="Copeland A."/>
            <person name="Lucas S."/>
            <person name="Lapidus A."/>
            <person name="Barry K."/>
            <person name="Detter J.C."/>
            <person name="Glavina del Rio T."/>
            <person name="Hammon N."/>
            <person name="Israni S."/>
            <person name="Pitluck S."/>
            <person name="Brettin T."/>
            <person name="Bruce D."/>
            <person name="Han C."/>
            <person name="Tapia R."/>
            <person name="Gilna P."/>
            <person name="Kiss H."/>
            <person name="Schmutz J."/>
            <person name="Larimer F."/>
            <person name="Land M."/>
            <person name="Kyrpides N."/>
            <person name="Ivanova N."/>
            <person name="Richardson P."/>
        </authorList>
    </citation>
    <scope>NUCLEOTIDE SEQUENCE [LARGE SCALE GENOMIC DNA]</scope>
    <source>
        <strain>ATCC BAA-621 / DSM 15236 / T118</strain>
    </source>
</reference>
<accession>Q21SJ8</accession>